<accession>Q6GF19</accession>
<dbReference type="EC" id="4.2.1.9" evidence="1"/>
<dbReference type="EMBL" id="BX571856">
    <property type="protein sequence ID" value="CAG41121.1"/>
    <property type="molecule type" value="Genomic_DNA"/>
</dbReference>
<dbReference type="RefSeq" id="WP_001255785.1">
    <property type="nucleotide sequence ID" value="NC_002952.2"/>
</dbReference>
<dbReference type="SMR" id="Q6GF19"/>
<dbReference type="KEGG" id="sar:SAR2140"/>
<dbReference type="HOGENOM" id="CLU_014271_4_2_9"/>
<dbReference type="UniPathway" id="UPA00047">
    <property type="reaction ID" value="UER00057"/>
</dbReference>
<dbReference type="UniPathway" id="UPA00049">
    <property type="reaction ID" value="UER00061"/>
</dbReference>
<dbReference type="Proteomes" id="UP000000596">
    <property type="component" value="Chromosome"/>
</dbReference>
<dbReference type="GO" id="GO:0005829">
    <property type="term" value="C:cytosol"/>
    <property type="evidence" value="ECO:0007669"/>
    <property type="project" value="TreeGrafter"/>
</dbReference>
<dbReference type="GO" id="GO:0051537">
    <property type="term" value="F:2 iron, 2 sulfur cluster binding"/>
    <property type="evidence" value="ECO:0007669"/>
    <property type="project" value="UniProtKB-UniRule"/>
</dbReference>
<dbReference type="GO" id="GO:0004160">
    <property type="term" value="F:dihydroxy-acid dehydratase activity"/>
    <property type="evidence" value="ECO:0007669"/>
    <property type="project" value="UniProtKB-UniRule"/>
</dbReference>
<dbReference type="GO" id="GO:0000287">
    <property type="term" value="F:magnesium ion binding"/>
    <property type="evidence" value="ECO:0007669"/>
    <property type="project" value="UniProtKB-UniRule"/>
</dbReference>
<dbReference type="GO" id="GO:0009097">
    <property type="term" value="P:isoleucine biosynthetic process"/>
    <property type="evidence" value="ECO:0007669"/>
    <property type="project" value="UniProtKB-UniRule"/>
</dbReference>
<dbReference type="GO" id="GO:0009099">
    <property type="term" value="P:L-valine biosynthetic process"/>
    <property type="evidence" value="ECO:0007669"/>
    <property type="project" value="UniProtKB-UniRule"/>
</dbReference>
<dbReference type="FunFam" id="3.50.30.80:FF:000001">
    <property type="entry name" value="Dihydroxy-acid dehydratase"/>
    <property type="match status" value="1"/>
</dbReference>
<dbReference type="Gene3D" id="3.50.30.80">
    <property type="entry name" value="IlvD/EDD C-terminal domain-like"/>
    <property type="match status" value="1"/>
</dbReference>
<dbReference type="HAMAP" id="MF_00012">
    <property type="entry name" value="IlvD"/>
    <property type="match status" value="1"/>
</dbReference>
<dbReference type="InterPro" id="IPR042096">
    <property type="entry name" value="Dihydro-acid_dehy_C"/>
</dbReference>
<dbReference type="InterPro" id="IPR004404">
    <property type="entry name" value="DihydroxyA_deHydtase"/>
</dbReference>
<dbReference type="InterPro" id="IPR020558">
    <property type="entry name" value="DiOHA_6PGluconate_deHydtase_CS"/>
</dbReference>
<dbReference type="InterPro" id="IPR056740">
    <property type="entry name" value="ILV_EDD_C"/>
</dbReference>
<dbReference type="InterPro" id="IPR000581">
    <property type="entry name" value="ILV_EDD_N"/>
</dbReference>
<dbReference type="InterPro" id="IPR037237">
    <property type="entry name" value="IlvD/EDD_N"/>
</dbReference>
<dbReference type="NCBIfam" id="TIGR00110">
    <property type="entry name" value="ilvD"/>
    <property type="match status" value="1"/>
</dbReference>
<dbReference type="NCBIfam" id="NF002068">
    <property type="entry name" value="PRK00911.1"/>
    <property type="match status" value="1"/>
</dbReference>
<dbReference type="PANTHER" id="PTHR43661">
    <property type="entry name" value="D-XYLONATE DEHYDRATASE"/>
    <property type="match status" value="1"/>
</dbReference>
<dbReference type="PANTHER" id="PTHR43661:SF3">
    <property type="entry name" value="D-XYLONATE DEHYDRATASE YAGF-RELATED"/>
    <property type="match status" value="1"/>
</dbReference>
<dbReference type="Pfam" id="PF24877">
    <property type="entry name" value="ILV_EDD_C"/>
    <property type="match status" value="1"/>
</dbReference>
<dbReference type="Pfam" id="PF00920">
    <property type="entry name" value="ILVD_EDD_N"/>
    <property type="match status" value="1"/>
</dbReference>
<dbReference type="SUPFAM" id="SSF143975">
    <property type="entry name" value="IlvD/EDD N-terminal domain-like"/>
    <property type="match status" value="1"/>
</dbReference>
<dbReference type="SUPFAM" id="SSF52016">
    <property type="entry name" value="LeuD/IlvD-like"/>
    <property type="match status" value="1"/>
</dbReference>
<dbReference type="PROSITE" id="PS00886">
    <property type="entry name" value="ILVD_EDD_1"/>
    <property type="match status" value="1"/>
</dbReference>
<dbReference type="PROSITE" id="PS00887">
    <property type="entry name" value="ILVD_EDD_2"/>
    <property type="match status" value="1"/>
</dbReference>
<protein>
    <recommendedName>
        <fullName evidence="1">Dihydroxy-acid dehydratase</fullName>
        <shortName evidence="1">DAD</shortName>
        <ecNumber evidence="1">4.2.1.9</ecNumber>
    </recommendedName>
</protein>
<reference key="1">
    <citation type="journal article" date="2004" name="Proc. Natl. Acad. Sci. U.S.A.">
        <title>Complete genomes of two clinical Staphylococcus aureus strains: evidence for the rapid evolution of virulence and drug resistance.</title>
        <authorList>
            <person name="Holden M.T.G."/>
            <person name="Feil E.J."/>
            <person name="Lindsay J.A."/>
            <person name="Peacock S.J."/>
            <person name="Day N.P.J."/>
            <person name="Enright M.C."/>
            <person name="Foster T.J."/>
            <person name="Moore C.E."/>
            <person name="Hurst L."/>
            <person name="Atkin R."/>
            <person name="Barron A."/>
            <person name="Bason N."/>
            <person name="Bentley S.D."/>
            <person name="Chillingworth C."/>
            <person name="Chillingworth T."/>
            <person name="Churcher C."/>
            <person name="Clark L."/>
            <person name="Corton C."/>
            <person name="Cronin A."/>
            <person name="Doggett J."/>
            <person name="Dowd L."/>
            <person name="Feltwell T."/>
            <person name="Hance Z."/>
            <person name="Harris B."/>
            <person name="Hauser H."/>
            <person name="Holroyd S."/>
            <person name="Jagels K."/>
            <person name="James K.D."/>
            <person name="Lennard N."/>
            <person name="Line A."/>
            <person name="Mayes R."/>
            <person name="Moule S."/>
            <person name="Mungall K."/>
            <person name="Ormond D."/>
            <person name="Quail M.A."/>
            <person name="Rabbinowitsch E."/>
            <person name="Rutherford K.M."/>
            <person name="Sanders M."/>
            <person name="Sharp S."/>
            <person name="Simmonds M."/>
            <person name="Stevens K."/>
            <person name="Whitehead S."/>
            <person name="Barrell B.G."/>
            <person name="Spratt B.G."/>
            <person name="Parkhill J."/>
        </authorList>
    </citation>
    <scope>NUCLEOTIDE SEQUENCE [LARGE SCALE GENOMIC DNA]</scope>
    <source>
        <strain>MRSA252</strain>
    </source>
</reference>
<organism>
    <name type="scientific">Staphylococcus aureus (strain MRSA252)</name>
    <dbReference type="NCBI Taxonomy" id="282458"/>
    <lineage>
        <taxon>Bacteria</taxon>
        <taxon>Bacillati</taxon>
        <taxon>Bacillota</taxon>
        <taxon>Bacilli</taxon>
        <taxon>Bacillales</taxon>
        <taxon>Staphylococcaceae</taxon>
        <taxon>Staphylococcus</taxon>
    </lineage>
</organism>
<sequence length="562" mass="60026">MRSDMIKKGDHQAPARSLLHATGALKSPTDMNKPFVAICNSYIDIVPGHVHLRELADIAKEAIREAGAIPFEFNTIGVDDGIAMGHIGMRYSLPSREIIADAAETVINAHWFDGVFYIPNCDKITPGMILAAMRTNVPAIFCSGGPMKAGLSAHGKALTLSSMFEAVGAFKEGSISKEEFLDMEQNACPTCGSCAGMFTANSMNCLMEVLGLALPYNGTALAVSDQRREMIRQAAFKLVENIKNDLKPRDIVTREAIDDAFALDMAMGGSTNTVLHTLAIANEAGIDYDLERINAIAKRTPYLSKIAPSSSYSMHDVHEAGGVPAIINELMKKDGTLHPDRITVTGKTLRENNEGKEIKNFDVIHSLDAPYDAQGGLSILFGNIAPKGAVIKVGGVDPSIKTFTGKAICFNSHDEAVEAIDNRTVRAGHVVVIRYEGPKGGPGMPEMLAPTSSIVGRGLGKDVALITDGRFSGATRGIAVGHISPEAASGGPIALIEDGDEITIDLTNRTLKVNQPEDVLARRRESLTPFKAKVKTGYLARYTALVTSANTGGVMQVPENLI</sequence>
<name>ILVD_STAAR</name>
<feature type="chain" id="PRO_0000103508" description="Dihydroxy-acid dehydratase">
    <location>
        <begin position="1"/>
        <end position="562"/>
    </location>
</feature>
<feature type="active site" description="Proton acceptor" evidence="1">
    <location>
        <position position="472"/>
    </location>
</feature>
<feature type="binding site" evidence="1">
    <location>
        <position position="80"/>
    </location>
    <ligand>
        <name>Mg(2+)</name>
        <dbReference type="ChEBI" id="CHEBI:18420"/>
    </ligand>
</feature>
<feature type="binding site" evidence="1">
    <location>
        <position position="121"/>
    </location>
    <ligand>
        <name>[2Fe-2S] cluster</name>
        <dbReference type="ChEBI" id="CHEBI:190135"/>
    </ligand>
</feature>
<feature type="binding site" evidence="1">
    <location>
        <position position="122"/>
    </location>
    <ligand>
        <name>Mg(2+)</name>
        <dbReference type="ChEBI" id="CHEBI:18420"/>
    </ligand>
</feature>
<feature type="binding site" description="via carbamate group" evidence="1">
    <location>
        <position position="123"/>
    </location>
    <ligand>
        <name>Mg(2+)</name>
        <dbReference type="ChEBI" id="CHEBI:18420"/>
    </ligand>
</feature>
<feature type="binding site" evidence="1">
    <location>
        <position position="194"/>
    </location>
    <ligand>
        <name>[2Fe-2S] cluster</name>
        <dbReference type="ChEBI" id="CHEBI:190135"/>
    </ligand>
</feature>
<feature type="binding site" evidence="1">
    <location>
        <position position="446"/>
    </location>
    <ligand>
        <name>Mg(2+)</name>
        <dbReference type="ChEBI" id="CHEBI:18420"/>
    </ligand>
</feature>
<feature type="modified residue" description="N6-carboxylysine" evidence="1">
    <location>
        <position position="123"/>
    </location>
</feature>
<comment type="function">
    <text evidence="1">Functions in the biosynthesis of branched-chain amino acids. Catalyzes the dehydration of (2R,3R)-2,3-dihydroxy-3-methylpentanoate (2,3-dihydroxy-3-methylvalerate) into 2-oxo-3-methylpentanoate (2-oxo-3-methylvalerate) and of (2R)-2,3-dihydroxy-3-methylbutanoate (2,3-dihydroxyisovalerate) into 2-oxo-3-methylbutanoate (2-oxoisovalerate), the penultimate precursor to L-isoleucine and L-valine, respectively.</text>
</comment>
<comment type="catalytic activity">
    <reaction evidence="1">
        <text>(2R)-2,3-dihydroxy-3-methylbutanoate = 3-methyl-2-oxobutanoate + H2O</text>
        <dbReference type="Rhea" id="RHEA:24809"/>
        <dbReference type="ChEBI" id="CHEBI:11851"/>
        <dbReference type="ChEBI" id="CHEBI:15377"/>
        <dbReference type="ChEBI" id="CHEBI:49072"/>
        <dbReference type="EC" id="4.2.1.9"/>
    </reaction>
    <physiologicalReaction direction="left-to-right" evidence="1">
        <dbReference type="Rhea" id="RHEA:24810"/>
    </physiologicalReaction>
</comment>
<comment type="catalytic activity">
    <reaction evidence="1">
        <text>(2R,3R)-2,3-dihydroxy-3-methylpentanoate = (S)-3-methyl-2-oxopentanoate + H2O</text>
        <dbReference type="Rhea" id="RHEA:27694"/>
        <dbReference type="ChEBI" id="CHEBI:15377"/>
        <dbReference type="ChEBI" id="CHEBI:35146"/>
        <dbReference type="ChEBI" id="CHEBI:49258"/>
        <dbReference type="EC" id="4.2.1.9"/>
    </reaction>
    <physiologicalReaction direction="left-to-right" evidence="1">
        <dbReference type="Rhea" id="RHEA:27695"/>
    </physiologicalReaction>
</comment>
<comment type="cofactor">
    <cofactor evidence="1">
        <name>[2Fe-2S] cluster</name>
        <dbReference type="ChEBI" id="CHEBI:190135"/>
    </cofactor>
    <text evidence="1">Binds 1 [2Fe-2S] cluster per subunit. This cluster acts as a Lewis acid cofactor.</text>
</comment>
<comment type="cofactor">
    <cofactor evidence="1">
        <name>Mg(2+)</name>
        <dbReference type="ChEBI" id="CHEBI:18420"/>
    </cofactor>
</comment>
<comment type="pathway">
    <text evidence="1">Amino-acid biosynthesis; L-isoleucine biosynthesis; L-isoleucine from 2-oxobutanoate: step 3/4.</text>
</comment>
<comment type="pathway">
    <text evidence="1">Amino-acid biosynthesis; L-valine biosynthesis; L-valine from pyruvate: step 3/4.</text>
</comment>
<comment type="subunit">
    <text evidence="1">Homodimer.</text>
</comment>
<comment type="similarity">
    <text evidence="1">Belongs to the IlvD/Edd family.</text>
</comment>
<gene>
    <name evidence="1" type="primary">ilvD</name>
    <name type="ordered locus">SAR2140</name>
</gene>
<keyword id="KW-0001">2Fe-2S</keyword>
<keyword id="KW-0028">Amino-acid biosynthesis</keyword>
<keyword id="KW-0100">Branched-chain amino acid biosynthesis</keyword>
<keyword id="KW-0408">Iron</keyword>
<keyword id="KW-0411">Iron-sulfur</keyword>
<keyword id="KW-0456">Lyase</keyword>
<keyword id="KW-0460">Magnesium</keyword>
<keyword id="KW-0479">Metal-binding</keyword>
<proteinExistence type="inferred from homology"/>
<evidence type="ECO:0000255" key="1">
    <source>
        <dbReference type="HAMAP-Rule" id="MF_00012"/>
    </source>
</evidence>